<reference key="1">
    <citation type="journal article" date="2002" name="Oncogene">
        <title>Human rgr: transforming activity and alteration in T-cell malignancies.</title>
        <authorList>
            <person name="Leonardi P."/>
            <person name="Kassin E."/>
            <person name="Hernandez-Munoz I."/>
            <person name="Diaz R."/>
            <person name="Inghirami G."/>
            <person name="Pellicer A."/>
        </authorList>
    </citation>
    <scope>NUCLEOTIDE SEQUENCE [MRNA] (ISOFORM 1)</scope>
    <scope>ALTERNATIVE SPLICING</scope>
    <source>
        <tissue>Testis</tissue>
    </source>
</reference>
<reference key="2">
    <citation type="journal article" date="1999" name="Nature">
        <title>The DNA sequence of human chromosome 22.</title>
        <authorList>
            <person name="Dunham I."/>
            <person name="Hunt A.R."/>
            <person name="Collins J.E."/>
            <person name="Bruskiewich R."/>
            <person name="Beare D.M."/>
            <person name="Clamp M."/>
            <person name="Smink L.J."/>
            <person name="Ainscough R."/>
            <person name="Almeida J.P."/>
            <person name="Babbage A.K."/>
            <person name="Bagguley C."/>
            <person name="Bailey J."/>
            <person name="Barlow K.F."/>
            <person name="Bates K.N."/>
            <person name="Beasley O.P."/>
            <person name="Bird C.P."/>
            <person name="Blakey S.E."/>
            <person name="Bridgeman A.M."/>
            <person name="Buck D."/>
            <person name="Burgess J."/>
            <person name="Burrill W.D."/>
            <person name="Burton J."/>
            <person name="Carder C."/>
            <person name="Carter N.P."/>
            <person name="Chen Y."/>
            <person name="Clark G."/>
            <person name="Clegg S.M."/>
            <person name="Cobley V.E."/>
            <person name="Cole C.G."/>
            <person name="Collier R.E."/>
            <person name="Connor R."/>
            <person name="Conroy D."/>
            <person name="Corby N.R."/>
            <person name="Coville G.J."/>
            <person name="Cox A.V."/>
            <person name="Davis J."/>
            <person name="Dawson E."/>
            <person name="Dhami P.D."/>
            <person name="Dockree C."/>
            <person name="Dodsworth S.J."/>
            <person name="Durbin R.M."/>
            <person name="Ellington A.G."/>
            <person name="Evans K.L."/>
            <person name="Fey J.M."/>
            <person name="Fleming K."/>
            <person name="French L."/>
            <person name="Garner A.A."/>
            <person name="Gilbert J.G.R."/>
            <person name="Goward M.E."/>
            <person name="Grafham D.V."/>
            <person name="Griffiths M.N.D."/>
            <person name="Hall C."/>
            <person name="Hall R.E."/>
            <person name="Hall-Tamlyn G."/>
            <person name="Heathcott R.W."/>
            <person name="Ho S."/>
            <person name="Holmes S."/>
            <person name="Hunt S.E."/>
            <person name="Jones M.C."/>
            <person name="Kershaw J."/>
            <person name="Kimberley A.M."/>
            <person name="King A."/>
            <person name="Laird G.K."/>
            <person name="Langford C.F."/>
            <person name="Leversha M.A."/>
            <person name="Lloyd C."/>
            <person name="Lloyd D.M."/>
            <person name="Martyn I.D."/>
            <person name="Mashreghi-Mohammadi M."/>
            <person name="Matthews L.H."/>
            <person name="Mccann O.T."/>
            <person name="Mcclay J."/>
            <person name="Mclaren S."/>
            <person name="McMurray A.A."/>
            <person name="Milne S.A."/>
            <person name="Mortimore B.J."/>
            <person name="Odell C.N."/>
            <person name="Pavitt R."/>
            <person name="Pearce A.V."/>
            <person name="Pearson D."/>
            <person name="Phillimore B.J.C.T."/>
            <person name="Phillips S.H."/>
            <person name="Plumb R.W."/>
            <person name="Ramsay H."/>
            <person name="Ramsey Y."/>
            <person name="Rogers L."/>
            <person name="Ross M.T."/>
            <person name="Scott C.E."/>
            <person name="Sehra H.K."/>
            <person name="Skuce C.D."/>
            <person name="Smalley S."/>
            <person name="Smith M.L."/>
            <person name="Soderlund C."/>
            <person name="Spragon L."/>
            <person name="Steward C.A."/>
            <person name="Sulston J.E."/>
            <person name="Swann R.M."/>
            <person name="Vaudin M."/>
            <person name="Wall M."/>
            <person name="Wallis J.M."/>
            <person name="Whiteley M.N."/>
            <person name="Willey D.L."/>
            <person name="Williams L."/>
            <person name="Williams S.A."/>
            <person name="Williamson H."/>
            <person name="Wilmer T.E."/>
            <person name="Wilming L."/>
            <person name="Wright C.L."/>
            <person name="Hubbard T."/>
            <person name="Bentley D.R."/>
            <person name="Beck S."/>
            <person name="Rogers J."/>
            <person name="Shimizu N."/>
            <person name="Minoshima S."/>
            <person name="Kawasaki K."/>
            <person name="Sasaki T."/>
            <person name="Asakawa S."/>
            <person name="Kudoh J."/>
            <person name="Shintani A."/>
            <person name="Shibuya K."/>
            <person name="Yoshizaki Y."/>
            <person name="Aoki N."/>
            <person name="Mitsuyama S."/>
            <person name="Roe B.A."/>
            <person name="Chen F."/>
            <person name="Chu L."/>
            <person name="Crabtree J."/>
            <person name="Deschamps S."/>
            <person name="Do A."/>
            <person name="Do T."/>
            <person name="Dorman A."/>
            <person name="Fang F."/>
            <person name="Fu Y."/>
            <person name="Hu P."/>
            <person name="Hua A."/>
            <person name="Kenton S."/>
            <person name="Lai H."/>
            <person name="Lao H.I."/>
            <person name="Lewis J."/>
            <person name="Lewis S."/>
            <person name="Lin S.-P."/>
            <person name="Loh P."/>
            <person name="Malaj E."/>
            <person name="Nguyen T."/>
            <person name="Pan H."/>
            <person name="Phan S."/>
            <person name="Qi S."/>
            <person name="Qian Y."/>
            <person name="Ray L."/>
            <person name="Ren Q."/>
            <person name="Shaull S."/>
            <person name="Sloan D."/>
            <person name="Song L."/>
            <person name="Wang Q."/>
            <person name="Wang Y."/>
            <person name="Wang Z."/>
            <person name="White J."/>
            <person name="Willingham D."/>
            <person name="Wu H."/>
            <person name="Yao Z."/>
            <person name="Zhan M."/>
            <person name="Zhang G."/>
            <person name="Chissoe S."/>
            <person name="Murray J."/>
            <person name="Miller N."/>
            <person name="Minx P."/>
            <person name="Fulton R."/>
            <person name="Johnson D."/>
            <person name="Bemis G."/>
            <person name="Bentley D."/>
            <person name="Bradshaw H."/>
            <person name="Bourne S."/>
            <person name="Cordes M."/>
            <person name="Du Z."/>
            <person name="Fulton L."/>
            <person name="Goela D."/>
            <person name="Graves T."/>
            <person name="Hawkins J."/>
            <person name="Hinds K."/>
            <person name="Kemp K."/>
            <person name="Latreille P."/>
            <person name="Layman D."/>
            <person name="Ozersky P."/>
            <person name="Rohlfing T."/>
            <person name="Scheet P."/>
            <person name="Walker C."/>
            <person name="Wamsley A."/>
            <person name="Wohldmann P."/>
            <person name="Pepin K."/>
            <person name="Nelson J."/>
            <person name="Korf I."/>
            <person name="Bedell J.A."/>
            <person name="Hillier L.W."/>
            <person name="Mardis E."/>
            <person name="Waterston R."/>
            <person name="Wilson R."/>
            <person name="Emanuel B.S."/>
            <person name="Shaikh T."/>
            <person name="Kurahashi H."/>
            <person name="Saitta S."/>
            <person name="Budarf M.L."/>
            <person name="McDermid H.E."/>
            <person name="Johnson A."/>
            <person name="Wong A.C.C."/>
            <person name="Morrow B.E."/>
            <person name="Edelmann L."/>
            <person name="Kim U.J."/>
            <person name="Shizuya H."/>
            <person name="Simon M.I."/>
            <person name="Dumanski J.P."/>
            <person name="Peyrard M."/>
            <person name="Kedra D."/>
            <person name="Seroussi E."/>
            <person name="Fransson I."/>
            <person name="Tapia I."/>
            <person name="Bruder C.E."/>
            <person name="O'Brien K.P."/>
            <person name="Wilkinson P."/>
            <person name="Bodenteich A."/>
            <person name="Hartman K."/>
            <person name="Hu X."/>
            <person name="Khan A.S."/>
            <person name="Lane L."/>
            <person name="Tilahun Y."/>
            <person name="Wright H."/>
        </authorList>
    </citation>
    <scope>NUCLEOTIDE SEQUENCE [LARGE SCALE GENOMIC DNA]</scope>
</reference>
<reference key="3">
    <citation type="journal article" date="2004" name="Genome Res.">
        <title>The status, quality, and expansion of the NIH full-length cDNA project: the Mammalian Gene Collection (MGC).</title>
        <authorList>
            <consortium name="The MGC Project Team"/>
        </authorList>
    </citation>
    <scope>NUCLEOTIDE SEQUENCE [LARGE SCALE MRNA] (ISOFORM 2)</scope>
    <scope>VARIANTS ARG-24; TYR-241 AND ALA-378</scope>
</reference>
<organism>
    <name type="scientific">Homo sapiens</name>
    <name type="common">Human</name>
    <dbReference type="NCBI Taxonomy" id="9606"/>
    <lineage>
        <taxon>Eukaryota</taxon>
        <taxon>Metazoa</taxon>
        <taxon>Chordata</taxon>
        <taxon>Craniata</taxon>
        <taxon>Vertebrata</taxon>
        <taxon>Euteleostomi</taxon>
        <taxon>Mammalia</taxon>
        <taxon>Eutheria</taxon>
        <taxon>Euarchontoglires</taxon>
        <taxon>Primates</taxon>
        <taxon>Haplorrhini</taxon>
        <taxon>Catarrhini</taxon>
        <taxon>Hominidae</taxon>
        <taxon>Homo</taxon>
    </lineage>
</organism>
<dbReference type="EMBL" id="AY101396">
    <property type="protein sequence ID" value="AAM51551.1"/>
    <property type="molecule type" value="mRNA"/>
</dbReference>
<dbReference type="EMBL" id="AP000347">
    <property type="status" value="NOT_ANNOTATED_CDS"/>
    <property type="molecule type" value="Genomic_DNA"/>
</dbReference>
<dbReference type="EMBL" id="BC101108">
    <property type="protein sequence ID" value="AAI01109.1"/>
    <property type="status" value="ALT_FRAME"/>
    <property type="molecule type" value="mRNA"/>
</dbReference>
<dbReference type="CCDS" id="CCDS13811.1">
    <molecule id="Q8IZJ4-1"/>
</dbReference>
<dbReference type="RefSeq" id="NP_001316353.1">
    <property type="nucleotide sequence ID" value="NM_001329424.1"/>
</dbReference>
<dbReference type="RefSeq" id="NP_001316354.1">
    <property type="nucleotide sequence ID" value="NM_001329425.1"/>
</dbReference>
<dbReference type="RefSeq" id="NP_705843.1">
    <molecule id="Q8IZJ4-1"/>
    <property type="nucleotide sequence ID" value="NM_153615.2"/>
</dbReference>
<dbReference type="SMR" id="Q8IZJ4"/>
<dbReference type="BioGRID" id="129336">
    <property type="interactions" value="9"/>
</dbReference>
<dbReference type="FunCoup" id="Q8IZJ4">
    <property type="interactions" value="7"/>
</dbReference>
<dbReference type="IntAct" id="Q8IZJ4">
    <property type="interactions" value="2"/>
</dbReference>
<dbReference type="STRING" id="9606.ENSP00000290691"/>
<dbReference type="iPTMnet" id="Q8IZJ4"/>
<dbReference type="PhosphoSitePlus" id="Q8IZJ4"/>
<dbReference type="BioMuta" id="RGL4"/>
<dbReference type="DMDM" id="34222891"/>
<dbReference type="MassIVE" id="Q8IZJ4"/>
<dbReference type="PaxDb" id="9606-ENSP00000290691"/>
<dbReference type="PeptideAtlas" id="Q8IZJ4"/>
<dbReference type="ProteomicsDB" id="71359">
    <molecule id="Q8IZJ4-1"/>
</dbReference>
<dbReference type="Antibodypedia" id="23769">
    <property type="antibodies" value="72 antibodies from 18 providers"/>
</dbReference>
<dbReference type="DNASU" id="266747"/>
<dbReference type="Ensembl" id="ENST00000290691.10">
    <molecule id="Q8IZJ4-1"/>
    <property type="protein sequence ID" value="ENSP00000290691.5"/>
    <property type="gene ID" value="ENSG00000159496.15"/>
</dbReference>
<dbReference type="GeneID" id="266747"/>
<dbReference type="KEGG" id="hsa:266747"/>
<dbReference type="MANE-Select" id="ENST00000290691.10">
    <property type="protein sequence ID" value="ENSP00000290691.5"/>
    <property type="RefSeq nucleotide sequence ID" value="NM_153615.2"/>
    <property type="RefSeq protein sequence ID" value="NP_705843.1"/>
</dbReference>
<dbReference type="UCSC" id="uc002zxn.4">
    <molecule id="Q8IZJ4-1"/>
    <property type="organism name" value="human"/>
</dbReference>
<dbReference type="AGR" id="HGNC:31911"/>
<dbReference type="CTD" id="266747"/>
<dbReference type="DisGeNET" id="266747"/>
<dbReference type="GeneCards" id="RGL4"/>
<dbReference type="HGNC" id="HGNC:31911">
    <property type="gene designation" value="RGL4"/>
</dbReference>
<dbReference type="HPA" id="ENSG00000159496">
    <property type="expression patterns" value="Tissue enriched (bone)"/>
</dbReference>
<dbReference type="MIM" id="612214">
    <property type="type" value="gene"/>
</dbReference>
<dbReference type="neXtProt" id="NX_Q8IZJ4"/>
<dbReference type="OpenTargets" id="ENSG00000159496"/>
<dbReference type="PharmGKB" id="PA162401277"/>
<dbReference type="VEuPathDB" id="HostDB:ENSG00000159496"/>
<dbReference type="eggNOG" id="KOG3629">
    <property type="taxonomic scope" value="Eukaryota"/>
</dbReference>
<dbReference type="GeneTree" id="ENSGT00940000161598"/>
<dbReference type="HOGENOM" id="CLU_010252_4_1_1"/>
<dbReference type="InParanoid" id="Q8IZJ4"/>
<dbReference type="OMA" id="YECLSCI"/>
<dbReference type="OrthoDB" id="9484397at2759"/>
<dbReference type="PAN-GO" id="Q8IZJ4">
    <property type="GO annotations" value="4 GO annotations based on evolutionary models"/>
</dbReference>
<dbReference type="PhylomeDB" id="Q8IZJ4"/>
<dbReference type="TreeFam" id="TF342571"/>
<dbReference type="PathwayCommons" id="Q8IZJ4"/>
<dbReference type="SignaLink" id="Q8IZJ4"/>
<dbReference type="BioGRID-ORCS" id="266747">
    <property type="hits" value="15 hits in 1153 CRISPR screens"/>
</dbReference>
<dbReference type="ChiTaRS" id="RGL4">
    <property type="organism name" value="human"/>
</dbReference>
<dbReference type="GenomeRNAi" id="266747"/>
<dbReference type="Pharos" id="Q8IZJ4">
    <property type="development level" value="Tbio"/>
</dbReference>
<dbReference type="PRO" id="PR:Q8IZJ4"/>
<dbReference type="Proteomes" id="UP000005640">
    <property type="component" value="Chromosome 22"/>
</dbReference>
<dbReference type="RNAct" id="Q8IZJ4">
    <property type="molecule type" value="protein"/>
</dbReference>
<dbReference type="Bgee" id="ENSG00000159496">
    <property type="expression patterns" value="Expressed in bone marrow and 102 other cell types or tissues"/>
</dbReference>
<dbReference type="ExpressionAtlas" id="Q8IZJ4">
    <property type="expression patterns" value="baseline and differential"/>
</dbReference>
<dbReference type="GO" id="GO:0031410">
    <property type="term" value="C:cytoplasmic vesicle"/>
    <property type="evidence" value="ECO:0007669"/>
    <property type="project" value="UniProtKB-KW"/>
</dbReference>
<dbReference type="GO" id="GO:0005886">
    <property type="term" value="C:plasma membrane"/>
    <property type="evidence" value="ECO:0000318"/>
    <property type="project" value="GO_Central"/>
</dbReference>
<dbReference type="GO" id="GO:0005085">
    <property type="term" value="F:guanyl-nucleotide exchange factor activity"/>
    <property type="evidence" value="ECO:0000318"/>
    <property type="project" value="GO_Central"/>
</dbReference>
<dbReference type="GO" id="GO:0007265">
    <property type="term" value="P:Ras protein signal transduction"/>
    <property type="evidence" value="ECO:0000318"/>
    <property type="project" value="GO_Central"/>
</dbReference>
<dbReference type="CDD" id="cd00155">
    <property type="entry name" value="RasGEF"/>
    <property type="match status" value="1"/>
</dbReference>
<dbReference type="Gene3D" id="1.10.840.10">
    <property type="entry name" value="Ras guanine-nucleotide exchange factors catalytic domain"/>
    <property type="match status" value="1"/>
</dbReference>
<dbReference type="InterPro" id="IPR008937">
    <property type="entry name" value="Ras-like_GEF"/>
</dbReference>
<dbReference type="InterPro" id="IPR023578">
    <property type="entry name" value="Ras_GEF_dom_sf"/>
</dbReference>
<dbReference type="InterPro" id="IPR001895">
    <property type="entry name" value="RASGEF_cat_dom"/>
</dbReference>
<dbReference type="InterPro" id="IPR036964">
    <property type="entry name" value="RASGEF_cat_dom_sf"/>
</dbReference>
<dbReference type="PANTHER" id="PTHR23113">
    <property type="entry name" value="GUANINE NUCLEOTIDE EXCHANGE FACTOR"/>
    <property type="match status" value="1"/>
</dbReference>
<dbReference type="PANTHER" id="PTHR23113:SF223">
    <property type="entry name" value="RAL-GDS-RELATED PROTEIN"/>
    <property type="match status" value="1"/>
</dbReference>
<dbReference type="Pfam" id="PF00617">
    <property type="entry name" value="RasGEF"/>
    <property type="match status" value="1"/>
</dbReference>
<dbReference type="SMART" id="SM00147">
    <property type="entry name" value="RasGEF"/>
    <property type="match status" value="1"/>
</dbReference>
<dbReference type="SUPFAM" id="SSF48366">
    <property type="entry name" value="Ras GEF"/>
    <property type="match status" value="1"/>
</dbReference>
<dbReference type="PROSITE" id="PS50009">
    <property type="entry name" value="RASGEF_CAT"/>
    <property type="match status" value="1"/>
</dbReference>
<evidence type="ECO:0000250" key="1"/>
<evidence type="ECO:0000255" key="2">
    <source>
        <dbReference type="PROSITE-ProRule" id="PRU00168"/>
    </source>
</evidence>
<evidence type="ECO:0000256" key="3">
    <source>
        <dbReference type="SAM" id="MobiDB-lite"/>
    </source>
</evidence>
<evidence type="ECO:0000269" key="4">
    <source>
    </source>
</evidence>
<evidence type="ECO:0000303" key="5">
    <source>
    </source>
</evidence>
<evidence type="ECO:0000305" key="6"/>
<gene>
    <name type="primary">RGL4</name>
    <name type="synonym">RGR</name>
</gene>
<accession>Q8IZJ4</accession>
<accession>Q495L8</accession>
<sequence>MRKLLTNLPAAAVLSAQVYSAVLQGLWEENVCGTPGRTRVCTALLYGQVCPFQDSTDGLRTITSILFNWPPENTSVYYQPPQRSSFRIKLAFRNLSWPGLGLEDHQEIVLGQLVLPEPNEAKPDDPAPRPGQHALTMPALEPAPPLLADLGPALEPESPAALGPPGYLHSAPGPAPAPGEGPPPGTVLEPQSAPESSCPCRGSVKNQPSEELPDMTTFPPRLLAEQLTLMDAELFKKVVLHECLGCIWGQGHLKGNEHMAPTVRATIAHFNRLTNCITTSCLGDHSMRARDRARVVEHWIKVARECLSLNNFSSVHVIVSALCSNPIGQLHKTWAGVSSKSMKELKELCKKDTAVKRDLLIKAGSFKVATQERNPQRVQMRLRRQKKGVVPFLGDFLTELQRLDSAIPDDLDGNTNKRSKEVRVLQEMQLLQVAAMNYRLRPLEKFVTYFTRMEQLSDKESYKLSCQLEPENP</sequence>
<name>RGDSR_HUMAN</name>
<protein>
    <recommendedName>
        <fullName>Ral-GDS-related protein</fullName>
        <shortName>hRGR</shortName>
    </recommendedName>
    <alternativeName>
        <fullName>Ral guanine nucleotide dissociation stimulator-like 4</fullName>
        <shortName>RalGDS-like 4</shortName>
    </alternativeName>
</protein>
<feature type="chain" id="PRO_0000068890" description="Ral-GDS-related protein">
    <location>
        <begin position="1"/>
        <end position="473"/>
    </location>
</feature>
<feature type="domain" description="Ras-GEF" evidence="2">
    <location>
        <begin position="219"/>
        <end position="471"/>
    </location>
</feature>
<feature type="region of interest" description="Disordered" evidence="3">
    <location>
        <begin position="117"/>
        <end position="215"/>
    </location>
</feature>
<feature type="compositionally biased region" description="Low complexity" evidence="3">
    <location>
        <begin position="134"/>
        <end position="157"/>
    </location>
</feature>
<feature type="compositionally biased region" description="Pro residues" evidence="3">
    <location>
        <begin position="173"/>
        <end position="185"/>
    </location>
</feature>
<feature type="splice variant" id="VSP_055850" description="In isoform 2." evidence="5">
    <original>SYKLSCQLEPENP</original>
    <variation>RWGFTMMSRIVSNSWPQAIHPPQPPKVLTLQV</variation>
    <location>
        <begin position="461"/>
        <end position="473"/>
    </location>
</feature>
<feature type="sequence variant" id="VAR_016244" description="In dbSNP:rs738786." evidence="4">
    <original>Q</original>
    <variation>R</variation>
    <location>
        <position position="24"/>
    </location>
</feature>
<feature type="sequence variant" id="VAR_051905" description="In dbSNP:rs17003394.">
    <original>R</original>
    <variation>C</variation>
    <location>
        <position position="37"/>
    </location>
</feature>
<feature type="sequence variant" id="VAR_051906" description="In dbSNP:rs17003397.">
    <original>T</original>
    <variation>M</variation>
    <location>
        <position position="216"/>
    </location>
</feature>
<feature type="sequence variant" id="VAR_016245" description="In dbSNP:rs2070446." evidence="4">
    <original>H</original>
    <variation>Y</variation>
    <location>
        <position position="241"/>
    </location>
</feature>
<feature type="sequence variant" id="VAR_051907" description="In dbSNP:rs17003398.">
    <original>E</original>
    <variation>K</variation>
    <location>
        <position position="297"/>
    </location>
</feature>
<feature type="sequence variant" id="VAR_016246" description="In dbSNP:rs2070449.">
    <original>M</original>
    <variation>R</variation>
    <location>
        <position position="342"/>
    </location>
</feature>
<feature type="sequence variant" id="VAR_051908" description="In dbSNP:rs8137247.">
    <original>D</original>
    <variation>V</variation>
    <location>
        <position position="358"/>
    </location>
</feature>
<feature type="sequence variant" id="VAR_016247" description="In dbSNP:rs1007298." evidence="4">
    <original>V</original>
    <variation>A</variation>
    <location>
        <position position="378"/>
    </location>
</feature>
<keyword id="KW-0025">Alternative splicing</keyword>
<keyword id="KW-0968">Cytoplasmic vesicle</keyword>
<keyword id="KW-0344">Guanine-nucleotide releasing factor</keyword>
<keyword id="KW-1267">Proteomics identification</keyword>
<keyword id="KW-1185">Reference proteome</keyword>
<proteinExistence type="evidence at protein level"/>
<comment type="subcellular location">
    <subcellularLocation>
        <location evidence="1">Cytoplasmic vesicle</location>
    </subcellularLocation>
</comment>
<comment type="alternative products">
    <event type="alternative splicing"/>
    <isoform>
        <id>Q8IZJ4-1</id>
        <name>1</name>
        <sequence type="displayed"/>
    </isoform>
    <isoform>
        <id>Q8IZJ4-2</id>
        <name>2</name>
        <sequence type="described" ref="VSP_055850"/>
    </isoform>
    <text>A number of isoforms are produced.</text>
</comment>
<comment type="sequence caution" evidence="6">
    <conflict type="frameshift">
        <sequence resource="EMBL-CDS" id="AAI01109"/>
    </conflict>
</comment>